<keyword id="KW-0002">3D-structure</keyword>
<keyword id="KW-0067">ATP-binding</keyword>
<keyword id="KW-0173">Coenzyme A biosynthesis</keyword>
<keyword id="KW-0963">Cytoplasm</keyword>
<keyword id="KW-0418">Kinase</keyword>
<keyword id="KW-0547">Nucleotide-binding</keyword>
<keyword id="KW-1267">Proteomics identification</keyword>
<keyword id="KW-1185">Reference proteome</keyword>
<keyword id="KW-0808">Transferase</keyword>
<gene>
    <name type="primary">PANK3</name>
</gene>
<sequence>MKIKDAKKPSFPWFGMDIGGTLVKLSYFEPIDITAEEEQEEVESLKSIRKYLTSNVAYGSTGIRDVHLELKDLTLFGRRGNLHFIRFPTQDLPTFIQMGRDKNFSTLQTVLCATGGGAYKFEKDFRTIGNLHLHKLDELDCLVKGLLYIDSVSFNGQAECYYFANASEPERCQKMPFNLDDPYPLLVVNIGSGVSILAVHSKDNYKRVTGTSLGGGTFLGLCSLLTGCESFEEALEMASKGDSTQADKLVRDIYGGDYERFGLPGWAVASSFGNMIYKEKRESVSKEDLARATLVTITNNIGSVARMCAVNEKINRVVFVGNFLRVNTLSMKLLAYALDYWSKGQLKALFLEHEGYFGAVGALLGLPNFS</sequence>
<organism>
    <name type="scientific">Homo sapiens</name>
    <name type="common">Human</name>
    <dbReference type="NCBI Taxonomy" id="9606"/>
    <lineage>
        <taxon>Eukaryota</taxon>
        <taxon>Metazoa</taxon>
        <taxon>Chordata</taxon>
        <taxon>Craniata</taxon>
        <taxon>Vertebrata</taxon>
        <taxon>Euteleostomi</taxon>
        <taxon>Mammalia</taxon>
        <taxon>Eutheria</taxon>
        <taxon>Euarchontoglires</taxon>
        <taxon>Primates</taxon>
        <taxon>Haplorrhini</taxon>
        <taxon>Catarrhini</taxon>
        <taxon>Hominidae</taxon>
        <taxon>Homo</taxon>
    </lineage>
</organism>
<protein>
    <recommendedName>
        <fullName>Pantothenate kinase 3</fullName>
        <shortName>hPanK3</shortName>
        <ecNumber evidence="2 3 5 6">2.7.1.33</ecNumber>
    </recommendedName>
    <alternativeName>
        <fullName>Pantothenic acid kinase 3</fullName>
    </alternativeName>
</protein>
<evidence type="ECO:0000269" key="1">
    <source>
    </source>
</evidence>
<evidence type="ECO:0000269" key="2">
    <source>
    </source>
</evidence>
<evidence type="ECO:0000269" key="3">
    <source>
    </source>
</evidence>
<evidence type="ECO:0000269" key="4">
    <source>
    </source>
</evidence>
<evidence type="ECO:0000269" key="5">
    <source>
    </source>
</evidence>
<evidence type="ECO:0000269" key="6">
    <source>
    </source>
</evidence>
<evidence type="ECO:0000305" key="7"/>
<evidence type="ECO:0000305" key="8">
    <source>
    </source>
</evidence>
<evidence type="ECO:0007829" key="9">
    <source>
        <dbReference type="PDB" id="3MK6"/>
    </source>
</evidence>
<evidence type="ECO:0007829" key="10">
    <source>
        <dbReference type="PDB" id="5KPR"/>
    </source>
</evidence>
<evidence type="ECO:0007829" key="11">
    <source>
        <dbReference type="PDB" id="7UE7"/>
    </source>
</evidence>
<proteinExistence type="evidence at protein level"/>
<comment type="function">
    <text evidence="2 3 5 6">Catalyzes the phosphorylation of pantothenate to generate 4'-phosphopantothenate in the first and rate-determining step of coenzyme A (CoA) synthesis.</text>
</comment>
<comment type="catalytic activity">
    <reaction evidence="2 3 5 6">
        <text>(R)-pantothenate + ATP = (R)-4'-phosphopantothenate + ADP + H(+)</text>
        <dbReference type="Rhea" id="RHEA:16373"/>
        <dbReference type="ChEBI" id="CHEBI:10986"/>
        <dbReference type="ChEBI" id="CHEBI:15378"/>
        <dbReference type="ChEBI" id="CHEBI:29032"/>
        <dbReference type="ChEBI" id="CHEBI:30616"/>
        <dbReference type="ChEBI" id="CHEBI:456216"/>
        <dbReference type="EC" id="2.7.1.33"/>
    </reaction>
</comment>
<comment type="activity regulation">
    <text evidence="2 3 5 6">Subject to allosteric regulation, exists in two distinct conformational states, a catalytically incompetent (or open) conformation stabilized by the binding of acetyl(acyl)-CoA, and a catalytically competent (or closed) conformation stabilized by ATP-binding (PubMed:27555321). Inhibited by acetyl-CoA and its thioesters which act as allosteric inhibitors and compete with the ATP-binding site (PubMed:17631502, PubMed:20797618, PubMed:27555321, PubMed:30927326). Inhibited by sulfonylureas and thiazolidinediones (PubMed:20797618). Activated by oleoylethanolamide, palmitoyl-carnitine and oleoyl-carnitine (PubMed:20797618).</text>
</comment>
<comment type="biophysicochemical properties">
    <kinetics>
        <KM evidence="6">175 uM for ATP</KM>
        <KM evidence="3">311 uM for ATP</KM>
        <KM evidence="6">17 uM for pantothenate</KM>
        <KM evidence="3">14 uM for pantothenate</KM>
    </kinetics>
</comment>
<comment type="pathway">
    <text evidence="2 3 5 8">Cofactor biosynthesis; coenzyme A biosynthesis; CoA from (R)-pantothenate: step 1/5.</text>
</comment>
<comment type="subunit">
    <text evidence="2 3 5">Homodimer.</text>
</comment>
<comment type="subcellular location">
    <subcellularLocation>
        <location evidence="4 7">Cytoplasm</location>
    </subcellularLocation>
</comment>
<comment type="tissue specificity">
    <text evidence="1">Highly expressed in the liver.</text>
</comment>
<comment type="similarity">
    <text evidence="7">Belongs to the type II pantothenate kinase family.</text>
</comment>
<accession>Q9H999</accession>
<accession>D3DQL1</accession>
<accession>Q53FJ9</accession>
<accession>Q7RTX4</accession>
<name>PANK3_HUMAN</name>
<reference key="1">
    <citation type="journal article" date="2004" name="Nat. Genet.">
        <title>Complete sequencing and characterization of 21,243 full-length human cDNAs.</title>
        <authorList>
            <person name="Ota T."/>
            <person name="Suzuki Y."/>
            <person name="Nishikawa T."/>
            <person name="Otsuki T."/>
            <person name="Sugiyama T."/>
            <person name="Irie R."/>
            <person name="Wakamatsu A."/>
            <person name="Hayashi K."/>
            <person name="Sato H."/>
            <person name="Nagai K."/>
            <person name="Kimura K."/>
            <person name="Makita H."/>
            <person name="Sekine M."/>
            <person name="Obayashi M."/>
            <person name="Nishi T."/>
            <person name="Shibahara T."/>
            <person name="Tanaka T."/>
            <person name="Ishii S."/>
            <person name="Yamamoto J."/>
            <person name="Saito K."/>
            <person name="Kawai Y."/>
            <person name="Isono Y."/>
            <person name="Nakamura Y."/>
            <person name="Nagahari K."/>
            <person name="Murakami K."/>
            <person name="Yasuda T."/>
            <person name="Iwayanagi T."/>
            <person name="Wagatsuma M."/>
            <person name="Shiratori A."/>
            <person name="Sudo H."/>
            <person name="Hosoiri T."/>
            <person name="Kaku Y."/>
            <person name="Kodaira H."/>
            <person name="Kondo H."/>
            <person name="Sugawara M."/>
            <person name="Takahashi M."/>
            <person name="Kanda K."/>
            <person name="Yokoi T."/>
            <person name="Furuya T."/>
            <person name="Kikkawa E."/>
            <person name="Omura Y."/>
            <person name="Abe K."/>
            <person name="Kamihara K."/>
            <person name="Katsuta N."/>
            <person name="Sato K."/>
            <person name="Tanikawa M."/>
            <person name="Yamazaki M."/>
            <person name="Ninomiya K."/>
            <person name="Ishibashi T."/>
            <person name="Yamashita H."/>
            <person name="Murakawa K."/>
            <person name="Fujimori K."/>
            <person name="Tanai H."/>
            <person name="Kimata M."/>
            <person name="Watanabe M."/>
            <person name="Hiraoka S."/>
            <person name="Chiba Y."/>
            <person name="Ishida S."/>
            <person name="Ono Y."/>
            <person name="Takiguchi S."/>
            <person name="Watanabe S."/>
            <person name="Yosida M."/>
            <person name="Hotuta T."/>
            <person name="Kusano J."/>
            <person name="Kanehori K."/>
            <person name="Takahashi-Fujii A."/>
            <person name="Hara H."/>
            <person name="Tanase T.-O."/>
            <person name="Nomura Y."/>
            <person name="Togiya S."/>
            <person name="Komai F."/>
            <person name="Hara R."/>
            <person name="Takeuchi K."/>
            <person name="Arita M."/>
            <person name="Imose N."/>
            <person name="Musashino K."/>
            <person name="Yuuki H."/>
            <person name="Oshima A."/>
            <person name="Sasaki N."/>
            <person name="Aotsuka S."/>
            <person name="Yoshikawa Y."/>
            <person name="Matsunawa H."/>
            <person name="Ichihara T."/>
            <person name="Shiohata N."/>
            <person name="Sano S."/>
            <person name="Moriya S."/>
            <person name="Momiyama H."/>
            <person name="Satoh N."/>
            <person name="Takami S."/>
            <person name="Terashima Y."/>
            <person name="Suzuki O."/>
            <person name="Nakagawa S."/>
            <person name="Senoh A."/>
            <person name="Mizoguchi H."/>
            <person name="Goto Y."/>
            <person name="Shimizu F."/>
            <person name="Wakebe H."/>
            <person name="Hishigaki H."/>
            <person name="Watanabe T."/>
            <person name="Sugiyama A."/>
            <person name="Takemoto M."/>
            <person name="Kawakami B."/>
            <person name="Yamazaki M."/>
            <person name="Watanabe K."/>
            <person name="Kumagai A."/>
            <person name="Itakura S."/>
            <person name="Fukuzumi Y."/>
            <person name="Fujimori Y."/>
            <person name="Komiyama M."/>
            <person name="Tashiro H."/>
            <person name="Tanigami A."/>
            <person name="Fujiwara T."/>
            <person name="Ono T."/>
            <person name="Yamada K."/>
            <person name="Fujii Y."/>
            <person name="Ozaki K."/>
            <person name="Hirao M."/>
            <person name="Ohmori Y."/>
            <person name="Kawabata A."/>
            <person name="Hikiji T."/>
            <person name="Kobatake N."/>
            <person name="Inagaki H."/>
            <person name="Ikema Y."/>
            <person name="Okamoto S."/>
            <person name="Okitani R."/>
            <person name="Kawakami T."/>
            <person name="Noguchi S."/>
            <person name="Itoh T."/>
            <person name="Shigeta K."/>
            <person name="Senba T."/>
            <person name="Matsumura K."/>
            <person name="Nakajima Y."/>
            <person name="Mizuno T."/>
            <person name="Morinaga M."/>
            <person name="Sasaki M."/>
            <person name="Togashi T."/>
            <person name="Oyama M."/>
            <person name="Hata H."/>
            <person name="Watanabe M."/>
            <person name="Komatsu T."/>
            <person name="Mizushima-Sugano J."/>
            <person name="Satoh T."/>
            <person name="Shirai Y."/>
            <person name="Takahashi Y."/>
            <person name="Nakagawa K."/>
            <person name="Okumura K."/>
            <person name="Nagase T."/>
            <person name="Nomura N."/>
            <person name="Kikuchi H."/>
            <person name="Masuho Y."/>
            <person name="Yamashita R."/>
            <person name="Nakai K."/>
            <person name="Yada T."/>
            <person name="Nakamura Y."/>
            <person name="Ohara O."/>
            <person name="Isogai T."/>
            <person name="Sugano S."/>
        </authorList>
    </citation>
    <scope>NUCLEOTIDE SEQUENCE [LARGE SCALE MRNA]</scope>
</reference>
<reference key="2">
    <citation type="submission" date="2005-04" db="EMBL/GenBank/DDBJ databases">
        <authorList>
            <person name="Suzuki Y."/>
            <person name="Sugano S."/>
            <person name="Totoki Y."/>
            <person name="Toyoda A."/>
            <person name="Takeda T."/>
            <person name="Sakaki Y."/>
            <person name="Tanaka A."/>
            <person name="Yokoyama S."/>
        </authorList>
    </citation>
    <scope>NUCLEOTIDE SEQUENCE [LARGE SCALE MRNA]</scope>
    <source>
        <tissue>Synovium</tissue>
    </source>
</reference>
<reference key="3">
    <citation type="submission" date="2005-09" db="EMBL/GenBank/DDBJ databases">
        <authorList>
            <person name="Mural R.J."/>
            <person name="Istrail S."/>
            <person name="Sutton G.G."/>
            <person name="Florea L."/>
            <person name="Halpern A.L."/>
            <person name="Mobarry C.M."/>
            <person name="Lippert R."/>
            <person name="Walenz B."/>
            <person name="Shatkay H."/>
            <person name="Dew I."/>
            <person name="Miller J.R."/>
            <person name="Flanigan M.J."/>
            <person name="Edwards N.J."/>
            <person name="Bolanos R."/>
            <person name="Fasulo D."/>
            <person name="Halldorsson B.V."/>
            <person name="Hannenhalli S."/>
            <person name="Turner R."/>
            <person name="Yooseph S."/>
            <person name="Lu F."/>
            <person name="Nusskern D.R."/>
            <person name="Shue B.C."/>
            <person name="Zheng X.H."/>
            <person name="Zhong F."/>
            <person name="Delcher A.L."/>
            <person name="Huson D.H."/>
            <person name="Kravitz S.A."/>
            <person name="Mouchard L."/>
            <person name="Reinert K."/>
            <person name="Remington K.A."/>
            <person name="Clark A.G."/>
            <person name="Waterman M.S."/>
            <person name="Eichler E.E."/>
            <person name="Adams M.D."/>
            <person name="Hunkapiller M.W."/>
            <person name="Myers E.W."/>
            <person name="Venter J.C."/>
        </authorList>
    </citation>
    <scope>NUCLEOTIDE SEQUENCE [LARGE SCALE GENOMIC DNA]</scope>
</reference>
<reference key="4">
    <citation type="journal article" date="2004" name="Genome Res.">
        <title>The status, quality, and expansion of the NIH full-length cDNA project: the Mammalian Gene Collection (MGC).</title>
        <authorList>
            <consortium name="The MGC Project Team"/>
        </authorList>
    </citation>
    <scope>NUCLEOTIDE SEQUENCE [LARGE SCALE MRNA]</scope>
    <source>
        <tissue>Lymph</tissue>
    </source>
</reference>
<reference key="5">
    <citation type="journal article" date="2001" name="Nat. Genet.">
        <title>A novel pantothenate kinase gene (PANK2) is defective in Hallervorden-Spatz syndrome.</title>
        <authorList>
            <person name="Zhou B."/>
            <person name="Westaway S.K."/>
            <person name="Levinson B."/>
            <person name="Johnson M.A."/>
            <person name="Gitschier J."/>
            <person name="Hayflick S.J."/>
        </authorList>
    </citation>
    <scope>TISSUE SPECIFICITY</scope>
</reference>
<reference key="6">
    <citation type="journal article" date="2012" name="PLoS ONE">
        <title>Compartmentalization of mammalian pantothenate kinases.</title>
        <authorList>
            <person name="Alfonso-Pecchio A."/>
            <person name="Garcia M."/>
            <person name="Leonardi R."/>
            <person name="Jackowski S."/>
        </authorList>
    </citation>
    <scope>SUBCELLULAR LOCATION</scope>
</reference>
<reference key="7">
    <citation type="journal article" date="2019" name="Protein Sci.">
        <title>Human pantothenate kinase 4 is a pseudo-pantothenate kinase.</title>
        <authorList>
            <person name="Yao J."/>
            <person name="Subramanian C."/>
            <person name="Rock C.O."/>
            <person name="Jackowski S."/>
        </authorList>
    </citation>
    <scope>FUNCTION</scope>
    <scope>CATALYTIC ACTIVITY</scope>
    <scope>ACTIVITY REGULATION</scope>
    <scope>BIOPHYSICOCHEMICAL PROPERTIES</scope>
    <scope>PATHWAY</scope>
    <scope>MUTAGENESIS OF GLU-138 AND ARG-207</scope>
</reference>
<reference key="8">
    <citation type="journal article" date="2007" name="J. Biol. Chem.">
        <title>Crystal structures of human pantothenate kinases. Insights into allosteric regulation and mutations linked to a neurodegeneration disorder.</title>
        <authorList>
            <person name="Hong B.S."/>
            <person name="Senisterra G."/>
            <person name="Rabeh W.M."/>
            <person name="Vedadi M."/>
            <person name="Leonardi R."/>
            <person name="Zhang Y.M."/>
            <person name="Rock C.O."/>
            <person name="Jackowski S."/>
            <person name="Park H.W."/>
        </authorList>
    </citation>
    <scope>X-RAY CRYSTALLOGRAPHY (2.05 ANGSTROMS) OF 12-368 IN COMPLEX WITH ACETYL-COA</scope>
    <scope>SUBUNIT</scope>
    <scope>FUNCTION</scope>
    <scope>CATALYTIC ACTIVITY</scope>
    <scope>ACTIVITY REGULATION</scope>
</reference>
<reference key="9">
    <citation type="journal article" date="2010" name="Chem. Biol.">
        <title>Modulation of pantothenate kinase 3 activity by small molecules that interact with the substrate/allosteric regulatory domain.</title>
        <authorList>
            <person name="Leonardi R."/>
            <person name="Zhang Y.M."/>
            <person name="Yun M.K."/>
            <person name="Zhou R."/>
            <person name="Zeng F.Y."/>
            <person name="Lin W."/>
            <person name="Cui J."/>
            <person name="Chen T."/>
            <person name="Rock C.O."/>
            <person name="White S.W."/>
            <person name="Jackowski S."/>
        </authorList>
    </citation>
    <scope>X-RAY CRYSTALLOGRAPHY (1.98 ANGSTROMS) OF 12-368 IN COMPLEX WITH ACETYL-COA</scope>
    <scope>FUNCTION</scope>
    <scope>CATALYTIC ACTIVITY</scope>
    <scope>BIOPHYSICOCHEMICAL PROPERTIES</scope>
    <scope>ACTIVITY REGULATION</scope>
    <scope>SUBUNIT</scope>
    <scope>MUTAGENESIS OF SER-195; ARG-207; ALA-267 AND ALA-269</scope>
</reference>
<reference key="10">
    <citation type="journal article" date="2016" name="J. Biol. Chem.">
        <title>Allosteric Regulation of Mammalian Pantothenate Kinase.</title>
        <authorList>
            <person name="Subramanian C."/>
            <person name="Yun M.K."/>
            <person name="Yao J."/>
            <person name="Sharma L.K."/>
            <person name="Lee R.E."/>
            <person name="White S.W."/>
            <person name="Jackowski S."/>
            <person name="Rock C.O."/>
        </authorList>
    </citation>
    <scope>X-RAY CRYSTALLOGRAPHY (1.83 ANGSTROMS) OF 12-370 IN COMPLEX WITH MAGNESIUM IONS; AMPPNP AND PANTOTHENATE</scope>
    <scope>FUNCTION</scope>
    <scope>CATALYTIC ACTIVITY</scope>
    <scope>ACTIVITY REGULATION</scope>
    <scope>SUBUNIT</scope>
    <scope>ACTIVE SITE</scope>
    <scope>MUTAGENESIS OF GLY-19 AND GLU-138</scope>
</reference>
<feature type="chain" id="PRO_0000161804" description="Pantothenate kinase 3">
    <location>
        <begin position="1"/>
        <end position="370"/>
    </location>
</feature>
<feature type="active site" description="Proton acceptor" evidence="5">
    <location>
        <position position="138"/>
    </location>
</feature>
<feature type="binding site" evidence="2">
    <location>
        <position position="192"/>
    </location>
    <ligand>
        <name>acetyl-CoA</name>
        <dbReference type="ChEBI" id="CHEBI:57288"/>
    </ligand>
</feature>
<feature type="binding site" evidence="2 3">
    <location>
        <position position="195"/>
    </location>
    <ligand>
        <name>acetyl-CoA</name>
        <dbReference type="ChEBI" id="CHEBI:57288"/>
    </ligand>
</feature>
<feature type="binding site" evidence="2 3">
    <location>
        <position position="207"/>
    </location>
    <ligand>
        <name>acetyl-CoA</name>
        <dbReference type="ChEBI" id="CHEBI:57288"/>
    </ligand>
</feature>
<feature type="mutagenesis site" description="Loss of catalytic activity." evidence="5">
    <original>G</original>
    <variation>V</variation>
    <location>
        <position position="19"/>
    </location>
</feature>
<feature type="mutagenesis site" description="Loss of catalytic activity." evidence="5">
    <original>E</original>
    <variation>A</variation>
    <location>
        <position position="138"/>
    </location>
</feature>
<feature type="mutagenesis site" description="Prevents acetyl-CoA production." evidence="6">
    <original>E</original>
    <variation>V</variation>
    <location>
        <position position="138"/>
    </location>
</feature>
<feature type="mutagenesis site" description="Retains 30% of wild-type activity. Refractory to inhibition by acetyl-CoA. Exhibits a 10-fold increase in the Km for pantothenate." evidence="3">
    <original>S</original>
    <variation>V</variation>
    <location>
        <position position="195"/>
    </location>
</feature>
<feature type="mutagenesis site" description="Loss of catalytic activity." evidence="3">
    <original>R</original>
    <variation>A</variation>
    <location>
        <position position="207"/>
    </location>
</feature>
<feature type="mutagenesis site" description="Increases affinity for ATP and decreases affinity for acetyl-CoA. Increases acetyl-CoA production." evidence="6">
    <original>R</original>
    <variation>W</variation>
    <location>
        <position position="207"/>
    </location>
</feature>
<feature type="mutagenesis site" description="Loss of catalytic activity but can bind ATP normally." evidence="3">
    <original>A</original>
    <variation>F</variation>
    <location>
        <position position="267"/>
    </location>
</feature>
<feature type="mutagenesis site" description="Loss of catalytic activity but can bind ATP normally." evidence="3">
    <original>A</original>
    <variation>F</variation>
    <location>
        <position position="269"/>
    </location>
</feature>
<feature type="sequence conflict" description="In Ref. 2; BAD97005." evidence="7" ref="2">
    <original>A</original>
    <variation>V</variation>
    <location>
        <position position="335"/>
    </location>
</feature>
<feature type="strand" evidence="11">
    <location>
        <begin position="13"/>
        <end position="18"/>
    </location>
</feature>
<feature type="strand" evidence="11">
    <location>
        <begin position="20"/>
        <end position="31"/>
    </location>
</feature>
<feature type="helix" evidence="11">
    <location>
        <begin position="35"/>
        <end position="40"/>
    </location>
</feature>
<feature type="helix" evidence="11">
    <location>
        <begin position="43"/>
        <end position="54"/>
    </location>
</feature>
<feature type="strand" evidence="11">
    <location>
        <begin position="56"/>
        <end position="58"/>
    </location>
</feature>
<feature type="turn" evidence="11">
    <location>
        <begin position="59"/>
        <end position="61"/>
    </location>
</feature>
<feature type="strand" evidence="11">
    <location>
        <begin position="62"/>
        <end position="64"/>
    </location>
</feature>
<feature type="helix" evidence="11">
    <location>
        <begin position="66"/>
        <end position="68"/>
    </location>
</feature>
<feature type="strand" evidence="11">
    <location>
        <begin position="70"/>
        <end position="75"/>
    </location>
</feature>
<feature type="strand" evidence="11">
    <location>
        <begin position="78"/>
        <end position="88"/>
    </location>
</feature>
<feature type="helix" evidence="11">
    <location>
        <begin position="89"/>
        <end position="91"/>
    </location>
</feature>
<feature type="helix" evidence="11">
    <location>
        <begin position="92"/>
        <end position="100"/>
    </location>
</feature>
<feature type="helix" evidence="10">
    <location>
        <begin position="102"/>
        <end position="104"/>
    </location>
</feature>
<feature type="helix" evidence="9">
    <location>
        <begin position="105"/>
        <end position="107"/>
    </location>
</feature>
<feature type="strand" evidence="11">
    <location>
        <begin position="110"/>
        <end position="115"/>
    </location>
</feature>
<feature type="helix" evidence="11">
    <location>
        <begin position="116"/>
        <end position="120"/>
    </location>
</feature>
<feature type="helix" evidence="11">
    <location>
        <begin position="122"/>
        <end position="125"/>
    </location>
</feature>
<feature type="strand" evidence="11">
    <location>
        <begin position="132"/>
        <end position="135"/>
    </location>
</feature>
<feature type="helix" evidence="11">
    <location>
        <begin position="138"/>
        <end position="152"/>
    </location>
</feature>
<feature type="strand" evidence="11">
    <location>
        <begin position="159"/>
        <end position="164"/>
    </location>
</feature>
<feature type="turn" evidence="11">
    <location>
        <begin position="165"/>
        <end position="167"/>
    </location>
</feature>
<feature type="turn" evidence="11">
    <location>
        <begin position="169"/>
        <end position="171"/>
    </location>
</feature>
<feature type="strand" evidence="11">
    <location>
        <begin position="173"/>
        <end position="176"/>
    </location>
</feature>
<feature type="strand" evidence="11">
    <location>
        <begin position="184"/>
        <end position="201"/>
    </location>
</feature>
<feature type="strand" evidence="11">
    <location>
        <begin position="204"/>
        <end position="212"/>
    </location>
</feature>
<feature type="helix" evidence="11">
    <location>
        <begin position="215"/>
        <end position="226"/>
    </location>
</feature>
<feature type="helix" evidence="11">
    <location>
        <begin position="231"/>
        <end position="240"/>
    </location>
</feature>
<feature type="helix" evidence="11">
    <location>
        <begin position="243"/>
        <end position="245"/>
    </location>
</feature>
<feature type="strand" evidence="11">
    <location>
        <begin position="247"/>
        <end position="249"/>
    </location>
</feature>
<feature type="helix" evidence="11">
    <location>
        <begin position="250"/>
        <end position="254"/>
    </location>
</feature>
<feature type="helix" evidence="11">
    <location>
        <begin position="259"/>
        <end position="261"/>
    </location>
</feature>
<feature type="strand" evidence="11">
    <location>
        <begin position="267"/>
        <end position="270"/>
    </location>
</feature>
<feature type="helix" evidence="11">
    <location>
        <begin position="273"/>
        <end position="276"/>
    </location>
</feature>
<feature type="helix" evidence="11">
    <location>
        <begin position="278"/>
        <end position="283"/>
    </location>
</feature>
<feature type="helix" evidence="11">
    <location>
        <begin position="286"/>
        <end position="312"/>
    </location>
</feature>
<feature type="strand" evidence="11">
    <location>
        <begin position="316"/>
        <end position="321"/>
    </location>
</feature>
<feature type="helix" evidence="11">
    <location>
        <begin position="322"/>
        <end position="324"/>
    </location>
</feature>
<feature type="helix" evidence="11">
    <location>
        <begin position="328"/>
        <end position="341"/>
    </location>
</feature>
<feature type="turn" evidence="11">
    <location>
        <begin position="342"/>
        <end position="344"/>
    </location>
</feature>
<feature type="strand" evidence="11">
    <location>
        <begin position="347"/>
        <end position="351"/>
    </location>
</feature>
<feature type="turn" evidence="11">
    <location>
        <begin position="352"/>
        <end position="355"/>
    </location>
</feature>
<feature type="helix" evidence="11">
    <location>
        <begin position="357"/>
        <end position="364"/>
    </location>
</feature>
<feature type="helix" evidence="11">
    <location>
        <begin position="365"/>
        <end position="368"/>
    </location>
</feature>
<dbReference type="EC" id="2.7.1.33" evidence="2 3 5 6"/>
<dbReference type="EMBL" id="AK022961">
    <property type="protein sequence ID" value="BAB14333.1"/>
    <property type="molecule type" value="mRNA"/>
</dbReference>
<dbReference type="EMBL" id="AK223285">
    <property type="protein sequence ID" value="BAD97005.1"/>
    <property type="molecule type" value="mRNA"/>
</dbReference>
<dbReference type="EMBL" id="CH471062">
    <property type="protein sequence ID" value="EAW61503.1"/>
    <property type="molecule type" value="Genomic_DNA"/>
</dbReference>
<dbReference type="EMBL" id="CH471062">
    <property type="protein sequence ID" value="EAW61505.1"/>
    <property type="molecule type" value="Genomic_DNA"/>
</dbReference>
<dbReference type="EMBL" id="BC013705">
    <property type="protein sequence ID" value="AAH13705.1"/>
    <property type="molecule type" value="mRNA"/>
</dbReference>
<dbReference type="EMBL" id="BK000011">
    <property type="protein sequence ID" value="DAA00005.1"/>
    <property type="molecule type" value="mRNA"/>
</dbReference>
<dbReference type="CCDS" id="CCDS4368.1"/>
<dbReference type="RefSeq" id="NP_078870.1">
    <property type="nucleotide sequence ID" value="NM_024594.4"/>
</dbReference>
<dbReference type="PDB" id="2I7P">
    <property type="method" value="X-ray"/>
    <property type="resolution" value="2.05 A"/>
    <property type="chains" value="A/B/C/D=12-368"/>
</dbReference>
<dbReference type="PDB" id="3MK6">
    <property type="method" value="X-ray"/>
    <property type="resolution" value="1.98 A"/>
    <property type="chains" value="A/B/C/D=12-368"/>
</dbReference>
<dbReference type="PDB" id="3SMS">
    <property type="method" value="X-ray"/>
    <property type="resolution" value="2.20 A"/>
    <property type="chains" value="A=10-370"/>
</dbReference>
<dbReference type="PDB" id="5KPR">
    <property type="method" value="X-ray"/>
    <property type="resolution" value="1.83 A"/>
    <property type="chains" value="A=12-370"/>
</dbReference>
<dbReference type="PDB" id="5KPT">
    <property type="method" value="X-ray"/>
    <property type="resolution" value="2.30 A"/>
    <property type="chains" value="A=12-370"/>
</dbReference>
<dbReference type="PDB" id="5KPZ">
    <property type="method" value="X-ray"/>
    <property type="resolution" value="2.40 A"/>
    <property type="chains" value="A=12-370"/>
</dbReference>
<dbReference type="PDB" id="5KQ8">
    <property type="method" value="X-ray"/>
    <property type="resolution" value="2.00 A"/>
    <property type="chains" value="A=12-370"/>
</dbReference>
<dbReference type="PDB" id="5KQD">
    <property type="method" value="X-ray"/>
    <property type="resolution" value="2.60 A"/>
    <property type="chains" value="A=12-370"/>
</dbReference>
<dbReference type="PDB" id="6B3V">
    <property type="method" value="X-ray"/>
    <property type="resolution" value="1.60 A"/>
    <property type="chains" value="A=12-370"/>
</dbReference>
<dbReference type="PDB" id="6PE6">
    <property type="method" value="X-ray"/>
    <property type="resolution" value="1.60 A"/>
    <property type="chains" value="A=12-370"/>
</dbReference>
<dbReference type="PDB" id="6X4J">
    <property type="method" value="X-ray"/>
    <property type="resolution" value="2.30 A"/>
    <property type="chains" value="A=12-370"/>
</dbReference>
<dbReference type="PDB" id="6X4K">
    <property type="method" value="X-ray"/>
    <property type="resolution" value="2.10 A"/>
    <property type="chains" value="A=12-370"/>
</dbReference>
<dbReference type="PDB" id="6X4L">
    <property type="method" value="X-ray"/>
    <property type="resolution" value="2.00 A"/>
    <property type="chains" value="A=12-370"/>
</dbReference>
<dbReference type="PDB" id="7UE3">
    <property type="method" value="X-ray"/>
    <property type="resolution" value="1.56 A"/>
    <property type="chains" value="A=12-370"/>
</dbReference>
<dbReference type="PDB" id="7UE4">
    <property type="method" value="X-ray"/>
    <property type="resolution" value="1.94 A"/>
    <property type="chains" value="A=12-370"/>
</dbReference>
<dbReference type="PDB" id="7UE5">
    <property type="method" value="X-ray"/>
    <property type="resolution" value="1.63 A"/>
    <property type="chains" value="A=12-370"/>
</dbReference>
<dbReference type="PDB" id="7UE6">
    <property type="method" value="X-ray"/>
    <property type="resolution" value="1.74 A"/>
    <property type="chains" value="A=12-370"/>
</dbReference>
<dbReference type="PDB" id="7UE7">
    <property type="method" value="X-ray"/>
    <property type="resolution" value="1.55 A"/>
    <property type="chains" value="A=12-370"/>
</dbReference>
<dbReference type="PDB" id="7UE8">
    <property type="method" value="X-ray"/>
    <property type="resolution" value="2.01 A"/>
    <property type="chains" value="A=12-370"/>
</dbReference>
<dbReference type="PDB" id="7UEO">
    <property type="method" value="X-ray"/>
    <property type="resolution" value="1.80 A"/>
    <property type="chains" value="A=12-370"/>
</dbReference>
<dbReference type="PDB" id="7UEP">
    <property type="method" value="X-ray"/>
    <property type="resolution" value="2.00 A"/>
    <property type="chains" value="A=12-370"/>
</dbReference>
<dbReference type="PDB" id="7UEQ">
    <property type="method" value="X-ray"/>
    <property type="resolution" value="1.70 A"/>
    <property type="chains" value="A=12-370"/>
</dbReference>
<dbReference type="PDB" id="7UER">
    <property type="method" value="X-ray"/>
    <property type="resolution" value="1.70 A"/>
    <property type="chains" value="A=12-370"/>
</dbReference>
<dbReference type="PDB" id="7UES">
    <property type="method" value="X-ray"/>
    <property type="resolution" value="1.80 A"/>
    <property type="chains" value="A=12-370"/>
</dbReference>
<dbReference type="PDB" id="7UET">
    <property type="method" value="X-ray"/>
    <property type="resolution" value="1.90 A"/>
    <property type="chains" value="A=12-370"/>
</dbReference>
<dbReference type="PDB" id="7UEU">
    <property type="method" value="X-ray"/>
    <property type="resolution" value="2.00 A"/>
    <property type="chains" value="A=12-370"/>
</dbReference>
<dbReference type="PDB" id="7UEV">
    <property type="method" value="X-ray"/>
    <property type="resolution" value="1.80 A"/>
    <property type="chains" value="A=12-370"/>
</dbReference>
<dbReference type="PDB" id="7UEX">
    <property type="method" value="X-ray"/>
    <property type="resolution" value="1.90 A"/>
    <property type="chains" value="A=12-370"/>
</dbReference>
<dbReference type="PDB" id="7UEY">
    <property type="method" value="X-ray"/>
    <property type="resolution" value="1.70 A"/>
    <property type="chains" value="A=12-370"/>
</dbReference>
<dbReference type="PDBsum" id="2I7P"/>
<dbReference type="PDBsum" id="3MK6"/>
<dbReference type="PDBsum" id="3SMS"/>
<dbReference type="PDBsum" id="5KPR"/>
<dbReference type="PDBsum" id="5KPT"/>
<dbReference type="PDBsum" id="5KPZ"/>
<dbReference type="PDBsum" id="5KQ8"/>
<dbReference type="PDBsum" id="5KQD"/>
<dbReference type="PDBsum" id="6B3V"/>
<dbReference type="PDBsum" id="6PE6"/>
<dbReference type="PDBsum" id="6X4J"/>
<dbReference type="PDBsum" id="6X4K"/>
<dbReference type="PDBsum" id="6X4L"/>
<dbReference type="PDBsum" id="7UE3"/>
<dbReference type="PDBsum" id="7UE4"/>
<dbReference type="PDBsum" id="7UE5"/>
<dbReference type="PDBsum" id="7UE6"/>
<dbReference type="PDBsum" id="7UE7"/>
<dbReference type="PDBsum" id="7UE8"/>
<dbReference type="PDBsum" id="7UEO"/>
<dbReference type="PDBsum" id="7UEP"/>
<dbReference type="PDBsum" id="7UEQ"/>
<dbReference type="PDBsum" id="7UER"/>
<dbReference type="PDBsum" id="7UES"/>
<dbReference type="PDBsum" id="7UET"/>
<dbReference type="PDBsum" id="7UEU"/>
<dbReference type="PDBsum" id="7UEV"/>
<dbReference type="PDBsum" id="7UEX"/>
<dbReference type="PDBsum" id="7UEY"/>
<dbReference type="SMR" id="Q9H999"/>
<dbReference type="BioGRID" id="122774">
    <property type="interactions" value="15"/>
</dbReference>
<dbReference type="FunCoup" id="Q9H999">
    <property type="interactions" value="4005"/>
</dbReference>
<dbReference type="IntAct" id="Q9H999">
    <property type="interactions" value="7"/>
</dbReference>
<dbReference type="STRING" id="9606.ENSP00000239231"/>
<dbReference type="BindingDB" id="Q9H999"/>
<dbReference type="ChEMBL" id="CHEMBL3407328"/>
<dbReference type="GlyGen" id="Q9H999">
    <property type="glycosylation" value="2 sites, 1 O-linked glycan (2 sites)"/>
</dbReference>
<dbReference type="iPTMnet" id="Q9H999"/>
<dbReference type="PhosphoSitePlus" id="Q9H999"/>
<dbReference type="SwissPalm" id="Q9H999"/>
<dbReference type="BioMuta" id="PANK3"/>
<dbReference type="DMDM" id="27805668"/>
<dbReference type="jPOST" id="Q9H999"/>
<dbReference type="MassIVE" id="Q9H999"/>
<dbReference type="PaxDb" id="9606-ENSP00000239231"/>
<dbReference type="PeptideAtlas" id="Q9H999"/>
<dbReference type="ProteomicsDB" id="81299"/>
<dbReference type="Pumba" id="Q9H999"/>
<dbReference type="Antibodypedia" id="16804">
    <property type="antibodies" value="230 antibodies from 23 providers"/>
</dbReference>
<dbReference type="DNASU" id="79646"/>
<dbReference type="Ensembl" id="ENST00000239231.7">
    <property type="protein sequence ID" value="ENSP00000239231.6"/>
    <property type="gene ID" value="ENSG00000120137.7"/>
</dbReference>
<dbReference type="GeneID" id="79646"/>
<dbReference type="KEGG" id="hsa:79646"/>
<dbReference type="MANE-Select" id="ENST00000239231.7">
    <property type="protein sequence ID" value="ENSP00000239231.6"/>
    <property type="RefSeq nucleotide sequence ID" value="NM_024594.4"/>
    <property type="RefSeq protein sequence ID" value="NP_078870.1"/>
</dbReference>
<dbReference type="UCSC" id="uc003lzy.4">
    <property type="organism name" value="human"/>
</dbReference>
<dbReference type="AGR" id="HGNC:19365"/>
<dbReference type="CTD" id="79646"/>
<dbReference type="DisGeNET" id="79646"/>
<dbReference type="GeneCards" id="PANK3"/>
<dbReference type="HGNC" id="HGNC:19365">
    <property type="gene designation" value="PANK3"/>
</dbReference>
<dbReference type="HPA" id="ENSG00000120137">
    <property type="expression patterns" value="Low tissue specificity"/>
</dbReference>
<dbReference type="MIM" id="606161">
    <property type="type" value="gene"/>
</dbReference>
<dbReference type="neXtProt" id="NX_Q9H999"/>
<dbReference type="OpenTargets" id="ENSG00000120137"/>
<dbReference type="PharmGKB" id="PA134903180"/>
<dbReference type="VEuPathDB" id="HostDB:ENSG00000120137"/>
<dbReference type="eggNOG" id="KOG2201">
    <property type="taxonomic scope" value="Eukaryota"/>
</dbReference>
<dbReference type="GeneTree" id="ENSGT00940000156396"/>
<dbReference type="HOGENOM" id="CLU_011154_0_1_1"/>
<dbReference type="InParanoid" id="Q9H999"/>
<dbReference type="OMA" id="FKNPDIC"/>
<dbReference type="OrthoDB" id="275583at2759"/>
<dbReference type="PAN-GO" id="Q9H999">
    <property type="GO annotations" value="4 GO annotations based on evolutionary models"/>
</dbReference>
<dbReference type="PhylomeDB" id="Q9H999"/>
<dbReference type="TreeFam" id="TF314866"/>
<dbReference type="BioCyc" id="MetaCyc:HS04372-MONOMER"/>
<dbReference type="BRENDA" id="2.7.1.33">
    <property type="organism ID" value="2681"/>
</dbReference>
<dbReference type="PathwayCommons" id="Q9H999"/>
<dbReference type="Reactome" id="R-HSA-196783">
    <property type="pathway name" value="Coenzyme A biosynthesis"/>
</dbReference>
<dbReference type="SABIO-RK" id="Q9H999"/>
<dbReference type="UniPathway" id="UPA00241">
    <property type="reaction ID" value="UER00352"/>
</dbReference>
<dbReference type="BioGRID-ORCS" id="79646">
    <property type="hits" value="15 hits in 1160 CRISPR screens"/>
</dbReference>
<dbReference type="ChiTaRS" id="PANK3">
    <property type="organism name" value="human"/>
</dbReference>
<dbReference type="EvolutionaryTrace" id="Q9H999"/>
<dbReference type="GenomeRNAi" id="79646"/>
<dbReference type="Pharos" id="Q9H999">
    <property type="development level" value="Tchem"/>
</dbReference>
<dbReference type="PRO" id="PR:Q9H999"/>
<dbReference type="Proteomes" id="UP000005640">
    <property type="component" value="Chromosome 5"/>
</dbReference>
<dbReference type="RNAct" id="Q9H999">
    <property type="molecule type" value="protein"/>
</dbReference>
<dbReference type="Bgee" id="ENSG00000120137">
    <property type="expression patterns" value="Expressed in jejunal mucosa and 209 other cell types or tissues"/>
</dbReference>
<dbReference type="ExpressionAtlas" id="Q9H999">
    <property type="expression patterns" value="baseline and differential"/>
</dbReference>
<dbReference type="GO" id="GO:0005829">
    <property type="term" value="C:cytosol"/>
    <property type="evidence" value="ECO:0000314"/>
    <property type="project" value="UniProtKB"/>
</dbReference>
<dbReference type="GO" id="GO:0005634">
    <property type="term" value="C:nucleus"/>
    <property type="evidence" value="ECO:0000318"/>
    <property type="project" value="GO_Central"/>
</dbReference>
<dbReference type="GO" id="GO:1905502">
    <property type="term" value="F:acetyl-CoA binding"/>
    <property type="evidence" value="ECO:0000314"/>
    <property type="project" value="UniProtKB"/>
</dbReference>
<dbReference type="GO" id="GO:0005524">
    <property type="term" value="F:ATP binding"/>
    <property type="evidence" value="ECO:0000314"/>
    <property type="project" value="UniProtKB"/>
</dbReference>
<dbReference type="GO" id="GO:0004594">
    <property type="term" value="F:pantothenate kinase activity"/>
    <property type="evidence" value="ECO:0000314"/>
    <property type="project" value="UniProtKB"/>
</dbReference>
<dbReference type="GO" id="GO:0042803">
    <property type="term" value="F:protein homodimerization activity"/>
    <property type="evidence" value="ECO:0000314"/>
    <property type="project" value="UniProtKB"/>
</dbReference>
<dbReference type="GO" id="GO:0019842">
    <property type="term" value="F:vitamin binding"/>
    <property type="evidence" value="ECO:0000314"/>
    <property type="project" value="UniProtKB"/>
</dbReference>
<dbReference type="GO" id="GO:0015937">
    <property type="term" value="P:coenzyme A biosynthetic process"/>
    <property type="evidence" value="ECO:0000314"/>
    <property type="project" value="UniProtKB"/>
</dbReference>
<dbReference type="GO" id="GO:0016310">
    <property type="term" value="P:phosphorylation"/>
    <property type="evidence" value="ECO:0000314"/>
    <property type="project" value="UniProtKB"/>
</dbReference>
<dbReference type="CDD" id="cd24137">
    <property type="entry name" value="ASKHA_NBD_PanK-II_Pank3"/>
    <property type="match status" value="1"/>
</dbReference>
<dbReference type="FunFam" id="3.30.420.40:FF:000025">
    <property type="entry name" value="pantothenate kinase 2, mitochondrial"/>
    <property type="match status" value="1"/>
</dbReference>
<dbReference type="FunFam" id="3.30.420.510:FF:000001">
    <property type="entry name" value="pantothenate kinase 2, mitochondrial"/>
    <property type="match status" value="1"/>
</dbReference>
<dbReference type="Gene3D" id="3.30.420.40">
    <property type="match status" value="1"/>
</dbReference>
<dbReference type="Gene3D" id="3.30.420.510">
    <property type="match status" value="1"/>
</dbReference>
<dbReference type="InterPro" id="IPR043129">
    <property type="entry name" value="ATPase_NBD"/>
</dbReference>
<dbReference type="InterPro" id="IPR004567">
    <property type="entry name" value="Type_II_PanK"/>
</dbReference>
<dbReference type="NCBIfam" id="TIGR00555">
    <property type="entry name" value="panK_eukar"/>
    <property type="match status" value="1"/>
</dbReference>
<dbReference type="PANTHER" id="PTHR12280">
    <property type="entry name" value="PANTOTHENATE KINASE"/>
    <property type="match status" value="1"/>
</dbReference>
<dbReference type="PANTHER" id="PTHR12280:SF21">
    <property type="entry name" value="PANTOTHENATE KINASE 3"/>
    <property type="match status" value="1"/>
</dbReference>
<dbReference type="Pfam" id="PF03630">
    <property type="entry name" value="Fumble"/>
    <property type="match status" value="1"/>
</dbReference>
<dbReference type="SUPFAM" id="SSF53067">
    <property type="entry name" value="Actin-like ATPase domain"/>
    <property type="match status" value="2"/>
</dbReference>